<feature type="chain" id="PRO_1000045225" description="5-oxoprolinase subunit A">
    <location>
        <begin position="1"/>
        <end position="250"/>
    </location>
</feature>
<evidence type="ECO:0000255" key="1">
    <source>
        <dbReference type="HAMAP-Rule" id="MF_00691"/>
    </source>
</evidence>
<sequence>MRVDLNCDLGEAFGNYSFGGDHQIIPLITSANVACGFHAGDENVMNETVKLAKAHNVAVGAHPGLPDLKGFGRRNIDISNDEIYNLMIYQLGALQGFCRIHQLKINHVKPHGALYQMGAKDREIANVIAQAVYDFDPSLVLVGLANSYLISEAKNVGLITASEVFADRRYEDDGQLVSRKESDAVITDTDEALKQVLKMVKENKVISKNNKEVTLQADTICVHGDGEHALLFVSKIREILMKEGIDIQSL</sequence>
<comment type="function">
    <text evidence="1">Catalyzes the cleavage of 5-oxoproline to form L-glutamate coupled to the hydrolysis of ATP to ADP and inorganic phosphate.</text>
</comment>
<comment type="catalytic activity">
    <reaction evidence="1">
        <text>5-oxo-L-proline + ATP + 2 H2O = L-glutamate + ADP + phosphate + H(+)</text>
        <dbReference type="Rhea" id="RHEA:10348"/>
        <dbReference type="ChEBI" id="CHEBI:15377"/>
        <dbReference type="ChEBI" id="CHEBI:15378"/>
        <dbReference type="ChEBI" id="CHEBI:29985"/>
        <dbReference type="ChEBI" id="CHEBI:30616"/>
        <dbReference type="ChEBI" id="CHEBI:43474"/>
        <dbReference type="ChEBI" id="CHEBI:58402"/>
        <dbReference type="ChEBI" id="CHEBI:456216"/>
        <dbReference type="EC" id="3.5.2.9"/>
    </reaction>
</comment>
<comment type="subunit">
    <text evidence="1">Forms a complex composed of PxpA, PxpB and PxpC.</text>
</comment>
<comment type="similarity">
    <text evidence="1">Belongs to the LamB/PxpA family.</text>
</comment>
<dbReference type="EC" id="3.5.2.9" evidence="1"/>
<dbReference type="EMBL" id="AP009324">
    <property type="protein sequence ID" value="BAF78475.1"/>
    <property type="molecule type" value="Genomic_DNA"/>
</dbReference>
<dbReference type="RefSeq" id="WP_001261793.1">
    <property type="nucleotide sequence ID" value="NC_009782.1"/>
</dbReference>
<dbReference type="SMR" id="A7X313"/>
<dbReference type="KEGG" id="saw:SAHV_1592"/>
<dbReference type="HOGENOM" id="CLU_069535_0_0_9"/>
<dbReference type="GO" id="GO:0017168">
    <property type="term" value="F:5-oxoprolinase (ATP-hydrolyzing) activity"/>
    <property type="evidence" value="ECO:0007669"/>
    <property type="project" value="UniProtKB-UniRule"/>
</dbReference>
<dbReference type="GO" id="GO:0005524">
    <property type="term" value="F:ATP binding"/>
    <property type="evidence" value="ECO:0007669"/>
    <property type="project" value="UniProtKB-UniRule"/>
</dbReference>
<dbReference type="GO" id="GO:0005975">
    <property type="term" value="P:carbohydrate metabolic process"/>
    <property type="evidence" value="ECO:0007669"/>
    <property type="project" value="InterPro"/>
</dbReference>
<dbReference type="CDD" id="cd10787">
    <property type="entry name" value="LamB_YcsF_like"/>
    <property type="match status" value="1"/>
</dbReference>
<dbReference type="Gene3D" id="3.20.20.370">
    <property type="entry name" value="Glycoside hydrolase/deacetylase"/>
    <property type="match status" value="1"/>
</dbReference>
<dbReference type="HAMAP" id="MF_00691">
    <property type="entry name" value="PxpA"/>
    <property type="match status" value="1"/>
</dbReference>
<dbReference type="InterPro" id="IPR011330">
    <property type="entry name" value="Glyco_hydro/deAcase_b/a-brl"/>
</dbReference>
<dbReference type="InterPro" id="IPR005501">
    <property type="entry name" value="LamB/YcsF/PxpA-like"/>
</dbReference>
<dbReference type="NCBIfam" id="NF003813">
    <property type="entry name" value="PRK05406.1-2"/>
    <property type="match status" value="1"/>
</dbReference>
<dbReference type="NCBIfam" id="NF003814">
    <property type="entry name" value="PRK05406.1-3"/>
    <property type="match status" value="1"/>
</dbReference>
<dbReference type="NCBIfam" id="NF003816">
    <property type="entry name" value="PRK05406.1-5"/>
    <property type="match status" value="1"/>
</dbReference>
<dbReference type="PANTHER" id="PTHR30292:SF0">
    <property type="entry name" value="5-OXOPROLINASE SUBUNIT A"/>
    <property type="match status" value="1"/>
</dbReference>
<dbReference type="PANTHER" id="PTHR30292">
    <property type="entry name" value="UNCHARACTERIZED PROTEIN YBGL-RELATED"/>
    <property type="match status" value="1"/>
</dbReference>
<dbReference type="Pfam" id="PF03746">
    <property type="entry name" value="LamB_YcsF"/>
    <property type="match status" value="1"/>
</dbReference>
<dbReference type="SUPFAM" id="SSF88713">
    <property type="entry name" value="Glycoside hydrolase/deacetylase"/>
    <property type="match status" value="1"/>
</dbReference>
<name>PXPA_STAA1</name>
<proteinExistence type="inferred from homology"/>
<keyword id="KW-0067">ATP-binding</keyword>
<keyword id="KW-0378">Hydrolase</keyword>
<keyword id="KW-0547">Nucleotide-binding</keyword>
<organism>
    <name type="scientific">Staphylococcus aureus (strain Mu3 / ATCC 700698)</name>
    <dbReference type="NCBI Taxonomy" id="418127"/>
    <lineage>
        <taxon>Bacteria</taxon>
        <taxon>Bacillati</taxon>
        <taxon>Bacillota</taxon>
        <taxon>Bacilli</taxon>
        <taxon>Bacillales</taxon>
        <taxon>Staphylococcaceae</taxon>
        <taxon>Staphylococcus</taxon>
    </lineage>
</organism>
<gene>
    <name evidence="1" type="primary">pxpA</name>
    <name type="ordered locus">SAHV_1592</name>
</gene>
<reference key="1">
    <citation type="journal article" date="2008" name="Antimicrob. Agents Chemother.">
        <title>Mutated response regulator graR is responsible for phenotypic conversion of Staphylococcus aureus from heterogeneous vancomycin-intermediate resistance to vancomycin-intermediate resistance.</title>
        <authorList>
            <person name="Neoh H.-M."/>
            <person name="Cui L."/>
            <person name="Yuzawa H."/>
            <person name="Takeuchi F."/>
            <person name="Matsuo M."/>
            <person name="Hiramatsu K."/>
        </authorList>
    </citation>
    <scope>NUCLEOTIDE SEQUENCE [LARGE SCALE GENOMIC DNA]</scope>
    <source>
        <strain>Mu3 / ATCC 700698</strain>
    </source>
</reference>
<accession>A7X313</accession>
<protein>
    <recommendedName>
        <fullName evidence="1">5-oxoprolinase subunit A</fullName>
        <shortName evidence="1">5-OPase subunit A</shortName>
        <ecNumber evidence="1">3.5.2.9</ecNumber>
    </recommendedName>
    <alternativeName>
        <fullName evidence="1">5-oxoprolinase (ATP-hydrolyzing) subunit A</fullName>
    </alternativeName>
</protein>